<proteinExistence type="evidence at protein level"/>
<protein>
    <recommendedName>
        <fullName>Succinate dehydrogenase [ubiquinone] flavoprotein subunit, mitochondrial</fullName>
        <ecNumber evidence="5 28">1.3.5.1</ecNumber>
    </recommendedName>
    <alternativeName>
        <fullName>Flavoprotein subunit of complex II</fullName>
        <shortName>Fp</shortName>
    </alternativeName>
    <alternativeName>
        <fullName>Malate dehydrogenase [quinone] flavoprotein subunit</fullName>
        <ecNumber evidence="1">1.1.5.-</ecNumber>
    </alternativeName>
</protein>
<comment type="function">
    <text evidence="1 5 11 16">Flavoprotein (FP) subunit of succinate dehydrogenase (SDH) that is involved in complex II of the mitochondrial electron transport chain and is responsible for transferring electrons from succinate to ubiquinone (coenzyme Q) (PubMed:10746566, PubMed:24781757). SDH also oxidizes malate to the non-canonical enol form of oxaloacetate, enol-oxaloacetate (By similarity). Enol-oxaloacetate, which is a potent inhibitor of the succinate dehydrogenase activity, is further isomerized into keto-oxaloacetate (By similarity). Can act as a tumor suppressor (PubMed:20484225).</text>
</comment>
<comment type="catalytic activity">
    <reaction evidence="5 28">
        <text>a ubiquinone + succinate = a ubiquinol + fumarate</text>
        <dbReference type="Rhea" id="RHEA:13713"/>
        <dbReference type="Rhea" id="RHEA-COMP:9565"/>
        <dbReference type="Rhea" id="RHEA-COMP:9566"/>
        <dbReference type="ChEBI" id="CHEBI:16389"/>
        <dbReference type="ChEBI" id="CHEBI:17976"/>
        <dbReference type="ChEBI" id="CHEBI:29806"/>
        <dbReference type="ChEBI" id="CHEBI:30031"/>
        <dbReference type="EC" id="1.3.5.1"/>
    </reaction>
</comment>
<comment type="catalytic activity">
    <reaction evidence="1">
        <text>(R)-malate + a quinone = enol-oxaloacetate + a quinol</text>
        <dbReference type="Rhea" id="RHEA:79827"/>
        <dbReference type="ChEBI" id="CHEBI:15588"/>
        <dbReference type="ChEBI" id="CHEBI:17479"/>
        <dbReference type="ChEBI" id="CHEBI:24646"/>
        <dbReference type="ChEBI" id="CHEBI:132124"/>
    </reaction>
    <physiologicalReaction direction="left-to-right" evidence="1">
        <dbReference type="Rhea" id="RHEA:79828"/>
    </physiologicalReaction>
</comment>
<comment type="catalytic activity">
    <reaction evidence="1">
        <text>(S)-malate + a quinone = enol-oxaloacetate + a quinol</text>
        <dbReference type="Rhea" id="RHEA:79831"/>
        <dbReference type="ChEBI" id="CHEBI:15589"/>
        <dbReference type="ChEBI" id="CHEBI:17479"/>
        <dbReference type="ChEBI" id="CHEBI:24646"/>
        <dbReference type="ChEBI" id="CHEBI:132124"/>
    </reaction>
    <physiologicalReaction direction="left-to-right" evidence="1">
        <dbReference type="Rhea" id="RHEA:79832"/>
    </physiologicalReaction>
</comment>
<comment type="cofactor">
    <cofactor evidence="20 21">
        <name>FAD</name>
        <dbReference type="ChEBI" id="CHEBI:57692"/>
    </cofactor>
</comment>
<comment type="activity regulation">
    <text evidence="1">Enol-oxaloacetate inhibits the succinate dehydrogenase activity.</text>
</comment>
<comment type="pathway">
    <text evidence="28">Carbohydrate metabolism; tricarboxylic acid cycle; fumarate from succinate (eukaryal route): step 1/1.</text>
</comment>
<comment type="subunit">
    <text evidence="10 15 19 20 21">Component of complex II composed of four subunits: the flavoprotein (FP) SDHA, iron-sulfur protein (IP) SDHB, and a cytochrome b560 composed of SDHC and SDHD (PubMed:37098072). Interacts with SDHAF2/SDH5; interaction is required for FAD attachment (PubMed:19628817, PubMed:32887801). Interacts with TRAP1 (PubMed:23747254). Interacts with LACC1 (PubMed:28593945).</text>
</comment>
<comment type="interaction">
    <interactant intactId="EBI-1057265">
        <id>P31040</id>
    </interactant>
    <interactant intactId="EBI-349854">
        <id>P13569</id>
        <label>CFTR</label>
    </interactant>
    <organismsDiffer>false</organismsDiffer>
    <experiments>15</experiments>
</comment>
<comment type="interaction">
    <interactant intactId="EBI-1057265">
        <id>P31040</id>
    </interactant>
    <interactant intactId="EBI-1047946">
        <id>P26045</id>
        <label>PTPN3</label>
    </interactant>
    <organismsDiffer>false</organismsDiffer>
    <experiments>2</experiments>
</comment>
<comment type="interaction">
    <interactant intactId="EBI-1057265">
        <id>P31040</id>
    </interactant>
    <interactant intactId="EBI-713250">
        <id>Q9NX18</id>
        <label>SDHAF2</label>
    </interactant>
    <organismsDiffer>false</organismsDiffer>
    <experiments>5</experiments>
</comment>
<comment type="interaction">
    <interactant intactId="EBI-1057265">
        <id>P31040</id>
    </interactant>
    <interactant intactId="EBI-1056481">
        <id>P21912</id>
        <label>SDHB</label>
    </interactant>
    <organismsDiffer>false</organismsDiffer>
    <experiments>11</experiments>
</comment>
<comment type="subcellular location">
    <subcellularLocation>
        <location evidence="21">Mitochondrion inner membrane</location>
        <topology evidence="21">Peripheral membrane protein</topology>
        <orientation evidence="21">Matrix side</orientation>
    </subcellularLocation>
</comment>
<comment type="alternative products">
    <event type="alternative splicing"/>
    <isoform>
        <id>P31040-1</id>
        <name>1</name>
        <sequence type="displayed"/>
    </isoform>
    <isoform>
        <id>P31040-2</id>
        <name>2</name>
        <sequence type="described" ref="VSP_055077"/>
    </isoform>
    <isoform>
        <id>P31040-3</id>
        <name>3</name>
        <sequence type="described" ref="VSP_055078"/>
    </isoform>
</comment>
<comment type="PTM">
    <text evidence="13">Phosphorylation at Tyr-215 is important for efficient electron transfer in complex II and the prevention of ROS generation.</text>
</comment>
<comment type="PTM">
    <text evidence="3">Acetylated. Deacetylated by SIRT3.</text>
</comment>
<comment type="disease" evidence="7 14 17">
    <disease id="DI-01380">
        <name>Mitochondrial complex II deficiency, nuclear type 1</name>
        <acronym>MC2DN1</acronym>
        <description>A disorder of the mitochondrial respiratory chain with heterogeneous clinical manifestations. Clinical features include psychomotor regression in infants, poor growth with lack of speech development, severe spastic quadriplegia, dystonia, progressive leukoencephalopathy, muscle weakness, exercise intolerance, cardiomyopathy. Some patients manifest Leigh syndrome or Kearns-Sayre syndrome. MC2DN1 inheritance is autosomal recessive.</description>
        <dbReference type="MIM" id="252011"/>
    </disease>
    <text>The disease is caused by variants affecting the gene represented in this entry.</text>
</comment>
<comment type="disease" evidence="5 16 22">
    <disease id="DI-01886">
        <name>Leigh syndrome</name>
        <acronym>LS</acronym>
        <description>An early-onset progressive neurodegenerative disorder characterized by the presence of focal, bilateral lesions in one or more areas of the central nervous system including the brainstem, thalamus, basal ganglia, cerebellum and spinal cord. Clinical features depend on which areas of the central nervous system are involved and include subacute onset of psychomotor retardation, hypotonia, ataxia, weakness, vision loss, eye movement abnormalities, seizures, and dysphagia.</description>
        <dbReference type="MIM" id="256000"/>
    </disease>
    <text>The disease is caused by variants affecting the gene represented in this entry.</text>
</comment>
<comment type="disease" evidence="12">
    <disease id="DI-02945">
        <name>Cardiomyopathy, dilated, 1GG</name>
        <acronym>CMD1GG</acronym>
        <description>A disorder characterized by ventricular dilation and impaired systolic function, resulting in congestive heart failure and arrhythmia. Patients are at risk of premature death.</description>
        <dbReference type="MIM" id="613642"/>
    </disease>
    <text>The disease is caused by variants affecting the gene represented in this entry.</text>
</comment>
<comment type="disease" evidence="11">
    <disease id="DI-03195">
        <name>Pheochromocytoma/paraganglioma syndrome 5</name>
        <acronym>PPGL5</acronym>
        <description>A form of pheochromocytoma/paraganglioma syndrome, a tumor predisposition syndrome characterized by the development of neuroendocrine tumors, usually in adulthood. Pheochromocytomas are catecholamine-producing tumors that arise from chromaffin cells in the adrenal medulla. Paragangliomas develop from sympathetic paraganglia in the thorax, abdomen, and pelvis, as well as from parasympathetic paraganglia in the head and neck. PPGL5 inheritance is autosomal dominant.</description>
        <dbReference type="MIM" id="614165"/>
    </disease>
    <text>The disease is caused by variants affecting the gene represented in this entry.</text>
</comment>
<comment type="disease" evidence="6 18">
    <disease id="DI-06073">
        <name>Neurodegeneration with ataxia and late-onset optic atrophy</name>
        <acronym>NDAXOA</acronym>
        <description>An autosomal dominant disorder characterized by slowly progressive cerebellar and gait ataxia, optic atrophy, and myopathy or myalgia. Additional features can include cardiomyopathy, psychiatric disturbances, and peripheral sensory impairment. Disease onset is usually in mid-adulthood.</description>
        <dbReference type="MIM" id="619259"/>
    </disease>
    <text>The disease is caused by variants affecting the gene represented in this entry.</text>
</comment>
<comment type="similarity">
    <text evidence="27">Belongs to the FAD-dependent oxidoreductase 2 family. FRD/SDH subfamily.</text>
</comment>
<comment type="sequence caution" evidence="27">
    <conflict type="erroneous initiation">
        <sequence resource="EMBL-CDS" id="BAD92228"/>
    </conflict>
    <text>Extended N-terminus.</text>
</comment>
<comment type="sequence caution" evidence="27">
    <conflict type="miscellaneous discrepancy">
        <sequence resource="EMBL-CDS" id="CAA37886"/>
    </conflict>
    <text>Differs extensively from that shown.</text>
</comment>
<comment type="online information" name="TCA Cycle Gene Mutation Database">
    <link uri="https://databases.lovd.nl/shared/genes/SDHA"/>
</comment>
<sequence length="664" mass="72692">MSGVRGLSRLLSARRLALAKAWPTVLQTGTRGFHFTVDGNKRASAKVSDSISAQYPVVDHEFDAVVVGAGGAGLRAAFGLSEAGFNTACVTKLFPTRSHTVAAQGGINAALGNMEEDNWRWHFYDTVKGSDWLGDQDAIHYMTEQAPAAVVELENYGMPFSRTEDGKIYQRAFGGQSLKFGKGGQAHRCCCVADRTGHSLLHTLYGRSLRYDTSYFVEYFALDLLMENGECRGVIALCIEDGSIHRIRAKNTVVATGGYGRTYFSCTSAHTSTGDGTAMITRAGLPCQDLEFVQFHPTGIYGAGCLITEGCRGEGGILINSQGERFMERYAPVAKDLASRDVVSRSMTLEIREGRGCGPEKDHVYLQLHHLPPEQLATRLPGISETAMIFAGVDVTKEPIPVLPTVHYNMGGIPTNYKGQVLRHVNGQDQIVPGLYACGEAACASVHGANRLGANSLLDLVVFGRACALSIEESCRPGDKVPPIKPNAGEESVMNLDKLRFADGSIRTSELRLSMQKSMQNHAAVFRVGSVLQEGCGKISKLYGDLKHLKTFDRGMVWNTDLVETLELQNLMLCALQTIYGAEARKESRGAHAREDYKVRIDEYDYSKPIQGQQKKPFEEHWRKHTLSYVDVGTGKVTLEYRPVIDKTLNEADCATVPPAIRSY</sequence>
<keyword id="KW-0002">3D-structure</keyword>
<keyword id="KW-0007">Acetylation</keyword>
<keyword id="KW-0025">Alternative splicing</keyword>
<keyword id="KW-0122">Cardiomyopathy</keyword>
<keyword id="KW-0903">Direct protein sequencing</keyword>
<keyword id="KW-0225">Disease variant</keyword>
<keyword id="KW-0249">Electron transport</keyword>
<keyword id="KW-0274">FAD</keyword>
<keyword id="KW-0285">Flavoprotein</keyword>
<keyword id="KW-0431">Leigh syndrome</keyword>
<keyword id="KW-0472">Membrane</keyword>
<keyword id="KW-0496">Mitochondrion</keyword>
<keyword id="KW-0999">Mitochondrion inner membrane</keyword>
<keyword id="KW-0523">Neurodegeneration</keyword>
<keyword id="KW-0560">Oxidoreductase</keyword>
<keyword id="KW-0597">Phosphoprotein</keyword>
<keyword id="KW-1274">Primary mitochondrial disease</keyword>
<keyword id="KW-1267">Proteomics identification</keyword>
<keyword id="KW-1185">Reference proteome</keyword>
<keyword id="KW-0809">Transit peptide</keyword>
<keyword id="KW-0813">Transport</keyword>
<keyword id="KW-0816">Tricarboxylic acid cycle</keyword>
<keyword id="KW-0043">Tumor suppressor</keyword>
<name>SDHA_HUMAN</name>
<feature type="transit peptide" description="Mitochondrion" evidence="2">
    <location>
        <begin position="1"/>
        <end position="42"/>
    </location>
</feature>
<feature type="chain" id="PRO_0000010335" description="Succinate dehydrogenase [ubiquinone] flavoprotein subunit, mitochondrial">
    <location>
        <begin position="43"/>
        <end position="664"/>
    </location>
</feature>
<feature type="active site" description="Proton acceptor" evidence="4">
    <location>
        <position position="340"/>
    </location>
</feature>
<feature type="binding site" evidence="20 21 29 32">
    <location>
        <position position="69"/>
    </location>
    <ligand>
        <name>FAD</name>
        <dbReference type="ChEBI" id="CHEBI:57692"/>
    </ligand>
</feature>
<feature type="binding site" evidence="20 29">
    <location>
        <position position="72"/>
    </location>
    <ligand>
        <name>FAD</name>
        <dbReference type="ChEBI" id="CHEBI:57692"/>
    </ligand>
</feature>
<feature type="binding site" evidence="21 32">
    <location>
        <position position="91"/>
    </location>
    <ligand>
        <name>FAD</name>
        <dbReference type="ChEBI" id="CHEBI:57692"/>
    </ligand>
</feature>
<feature type="binding site" evidence="21 32">
    <location>
        <position position="92"/>
    </location>
    <ligand>
        <name>FAD</name>
        <dbReference type="ChEBI" id="CHEBI:57692"/>
    </ligand>
</feature>
<feature type="binding site" evidence="21 32">
    <location>
        <position position="98"/>
    </location>
    <ligand>
        <name>FAD</name>
        <dbReference type="ChEBI" id="CHEBI:57692"/>
    </ligand>
</feature>
<feature type="binding site" evidence="20 21 29 32">
    <location>
        <position position="100"/>
    </location>
    <ligand>
        <name>FAD</name>
        <dbReference type="ChEBI" id="CHEBI:57692"/>
    </ligand>
</feature>
<feature type="binding site" evidence="20 21 29 32">
    <location>
        <position position="105"/>
    </location>
    <ligand>
        <name>FAD</name>
        <dbReference type="ChEBI" id="CHEBI:57692"/>
    </ligand>
</feature>
<feature type="binding site" evidence="20 21 29 32">
    <location>
        <position position="221"/>
    </location>
    <ligand>
        <name>FAD</name>
        <dbReference type="ChEBI" id="CHEBI:57692"/>
    </ligand>
</feature>
<feature type="binding site" evidence="20 29">
    <location>
        <position position="275"/>
    </location>
    <ligand>
        <name>FAD</name>
        <dbReference type="ChEBI" id="CHEBI:57692"/>
    </ligand>
</feature>
<feature type="binding site" evidence="20 29">
    <location>
        <position position="296"/>
    </location>
    <ligand>
        <name>oxaloacetate</name>
        <dbReference type="ChEBI" id="CHEBI:16452"/>
    </ligand>
</feature>
<feature type="binding site" evidence="20 29">
    <location>
        <position position="340"/>
    </location>
    <ligand>
        <name>oxaloacetate</name>
        <dbReference type="ChEBI" id="CHEBI:16452"/>
    </ligand>
</feature>
<feature type="binding site" evidence="20 29">
    <location>
        <position position="407"/>
    </location>
    <ligand>
        <name>oxaloacetate</name>
        <dbReference type="ChEBI" id="CHEBI:16452"/>
    </ligand>
</feature>
<feature type="binding site" evidence="21 29 30 31 32">
    <location>
        <position position="440"/>
    </location>
    <ligand>
        <name>FAD</name>
        <dbReference type="ChEBI" id="CHEBI:57692"/>
    </ligand>
</feature>
<feature type="binding site" evidence="20 29">
    <location>
        <position position="451"/>
    </location>
    <ligand>
        <name>oxaloacetate</name>
        <dbReference type="ChEBI" id="CHEBI:16452"/>
    </ligand>
</feature>
<feature type="binding site" evidence="20 29">
    <location>
        <position position="454"/>
    </location>
    <ligand>
        <name>oxaloacetate</name>
        <dbReference type="ChEBI" id="CHEBI:16452"/>
    </ligand>
</feature>
<feature type="binding site" evidence="20 21 29 32">
    <location>
        <position position="456"/>
    </location>
    <ligand>
        <name>FAD</name>
        <dbReference type="ChEBI" id="CHEBI:57692"/>
    </ligand>
</feature>
<feature type="binding site" evidence="20 21 29 32">
    <location>
        <position position="457"/>
    </location>
    <ligand>
        <name>FAD</name>
        <dbReference type="ChEBI" id="CHEBI:57692"/>
    </ligand>
</feature>
<feature type="modified residue" description="Tele-8alpha-FAD histidine" evidence="20 21 29 32">
    <location>
        <position position="99"/>
    </location>
</feature>
<feature type="modified residue" description="N6-acetyllysine" evidence="3">
    <location>
        <position position="167"/>
    </location>
</feature>
<feature type="modified residue" description="N6-acetyllysine; alternate" evidence="33">
    <location>
        <position position="179"/>
    </location>
</feature>
<feature type="modified residue" description="N6-succinyllysine; alternate" evidence="3">
    <location>
        <position position="179"/>
    </location>
</feature>
<feature type="modified residue" description="N6-acetyllysine" evidence="3">
    <location>
        <position position="182"/>
    </location>
</feature>
<feature type="modified residue" description="Phosphotyrosine; by SRC" evidence="13">
    <location>
        <position position="215"/>
    </location>
</feature>
<feature type="modified residue" description="N6-acetyllysine; alternate" evidence="3">
    <location>
        <position position="250"/>
    </location>
</feature>
<feature type="modified residue" description="N6-succinyllysine; alternate" evidence="3">
    <location>
        <position position="250"/>
    </location>
</feature>
<feature type="modified residue" description="N6-acetyllysine; alternate" evidence="33">
    <location>
        <position position="335"/>
    </location>
</feature>
<feature type="modified residue" description="N6-succinyllysine; alternate" evidence="3">
    <location>
        <position position="335"/>
    </location>
</feature>
<feature type="modified residue" description="N6-acetyllysine" evidence="3">
    <location>
        <position position="480"/>
    </location>
</feature>
<feature type="modified residue" description="N6-acetyllysine; alternate" evidence="3">
    <location>
        <position position="485"/>
    </location>
</feature>
<feature type="modified residue" description="N6-succinyllysine; alternate" evidence="3">
    <location>
        <position position="485"/>
    </location>
</feature>
<feature type="modified residue" description="N6-acetyllysine; alternate" evidence="3">
    <location>
        <position position="498"/>
    </location>
</feature>
<feature type="modified residue" description="N6-succinyllysine; alternate" evidence="3">
    <location>
        <position position="498"/>
    </location>
</feature>
<feature type="modified residue" description="N6-acetyllysine" evidence="3">
    <location>
        <position position="517"/>
    </location>
</feature>
<feature type="modified residue" description="N6-acetyllysine; alternate" evidence="3">
    <location>
        <position position="538"/>
    </location>
</feature>
<feature type="modified residue" description="N6-succinyllysine; alternate" evidence="3">
    <location>
        <position position="538"/>
    </location>
</feature>
<feature type="modified residue" description="N6-acetyllysine" evidence="33">
    <location>
        <position position="541"/>
    </location>
</feature>
<feature type="modified residue" description="N6-acetyllysine; alternate" evidence="3">
    <location>
        <position position="547"/>
    </location>
</feature>
<feature type="modified residue" description="N6-succinyllysine; alternate" evidence="3">
    <location>
        <position position="547"/>
    </location>
</feature>
<feature type="modified residue" description="N6-acetyllysine" evidence="3">
    <location>
        <position position="550"/>
    </location>
</feature>
<feature type="modified residue" description="N6-acetyllysine" evidence="3">
    <location>
        <position position="598"/>
    </location>
</feature>
<feature type="modified residue" description="N6-acetyllysine" evidence="33">
    <location>
        <position position="608"/>
    </location>
</feature>
<feature type="modified residue" description="N6-succinyllysine" evidence="3">
    <location>
        <position position="615"/>
    </location>
</feature>
<feature type="modified residue" description="N6-acetyllysine" evidence="3">
    <location>
        <position position="624"/>
    </location>
</feature>
<feature type="modified residue" description="N6-acetyllysine" evidence="3">
    <location>
        <position position="636"/>
    </location>
</feature>
<feature type="modified residue" description="N6-acetyllysine" evidence="3">
    <location>
        <position position="647"/>
    </location>
</feature>
<feature type="splice variant" id="VSP_055077" description="In isoform 2." evidence="25">
    <location>
        <begin position="105"/>
        <end position="152"/>
    </location>
</feature>
<feature type="splice variant" id="VSP_055078" description="In isoform 3." evidence="26">
    <location>
        <begin position="126"/>
        <end position="270"/>
    </location>
</feature>
<feature type="sequence variant" id="VAR_049214" description="In dbSNP:rs1061518.">
    <original>F</original>
    <variation>V</variation>
    <location>
        <position position="33"/>
    </location>
</feature>
<feature type="sequence variant" id="VAR_049215" description="In dbSNP:rs34635677." evidence="8">
    <original>D</original>
    <variation>V</variation>
    <location>
        <position position="38"/>
    </location>
</feature>
<feature type="sequence variant" id="VAR_074022" description="In LS; decrease in succinate dehydrogenase activity." evidence="16">
    <original>C</original>
    <variation>G</variation>
    <location>
        <position position="189"/>
    </location>
</feature>
<feature type="sequence variant" id="VAR_049216" description="In dbSNP:rs1041946.">
    <original>E</original>
    <variation>Q</variation>
    <location>
        <position position="240"/>
    </location>
</feature>
<feature type="sequence variant" id="VAR_059307" description="In dbSNP:rs1062468.">
    <original>V</original>
    <variation>I</variation>
    <location>
        <position position="333"/>
    </location>
</feature>
<feature type="sequence variant" id="VAR_085584" description="In NDAXOA; dbSNP:rs1553999752." evidence="6 18">
    <original>R</original>
    <variation>C</variation>
    <location>
        <position position="451"/>
    </location>
</feature>
<feature type="sequence variant" id="VAR_085396" description="In dbSNP:rs151266052." evidence="14 17">
    <original>T</original>
    <variation>I</variation>
    <location>
        <position position="508"/>
    </location>
</feature>
<feature type="sequence variant" id="VAR_085397" description="In MC2DN1; uncertain significance; dbSNP:rs397514541." evidence="14 17">
    <original>S</original>
    <variation>L</variation>
    <location>
        <position position="509"/>
    </location>
</feature>
<feature type="sequence variant" id="VAR_016878" description="In LS; dbSNP:rs137852767." evidence="5">
    <original>A</original>
    <variation>V</variation>
    <location>
        <position position="524"/>
    </location>
</feature>
<feature type="sequence variant" id="VAR_002449" description="In LS; dbSNP:rs9809219." evidence="22">
    <original>R</original>
    <variation>W</variation>
    <location>
        <position position="554"/>
    </location>
</feature>
<feature type="sequence variant" id="VAR_016879" description="In MC2DN1 and CMD1GG; dbSNP:rs137852768." evidence="7 12">
    <original>G</original>
    <variation>E</variation>
    <location>
        <position position="555"/>
    </location>
</feature>
<feature type="sequence variant" id="VAR_065975" description="In PPGL5; loss of activity; dbSNP:rs387906780." evidence="11">
    <original>R</original>
    <variation>W</variation>
    <location>
        <position position="589"/>
    </location>
</feature>
<feature type="sequence variant" id="VAR_071037" description="In dbSNP:rs6960." evidence="9 23 24">
    <original>Y</original>
    <variation>F</variation>
    <location>
        <position position="629"/>
    </location>
</feature>
<feature type="sequence variant" id="VAR_049217" description="In dbSNP:rs6962." evidence="23">
    <original>V</original>
    <variation>I</variation>
    <location>
        <position position="657"/>
    </location>
</feature>
<feature type="sequence conflict" description="In Ref. 3; AAD51006." evidence="27" ref="3">
    <original>G</original>
    <variation>D</variation>
    <location>
        <position position="356"/>
    </location>
</feature>
<feature type="sequence conflict" description="In Ref. 3; AAD51006." evidence="27" ref="3">
    <original>E</original>
    <variation>D</variation>
    <location>
        <position position="398"/>
    </location>
</feature>
<feature type="sequence conflict" description="In Ref. 3; AAD51006." evidence="27" ref="3">
    <original>A</original>
    <variation>T</variation>
    <location>
        <position position="591"/>
    </location>
</feature>
<feature type="sequence conflict" description="In Ref. 3; AAD51006." evidence="27" ref="3">
    <original>D</original>
    <variation>G</variation>
    <location>
        <position position="596"/>
    </location>
</feature>
<feature type="sequence conflict" description="In Ref. 3; AAD51006." evidence="27" ref="3">
    <original>R</original>
    <variation>Q</variation>
    <location>
        <position position="600"/>
    </location>
</feature>
<feature type="sequence conflict" description="In Ref. 4; BAG58722." evidence="27" ref="4">
    <original>F</original>
    <variation>L</variation>
    <location>
        <position position="618"/>
    </location>
</feature>
<feature type="sequence conflict" description="In Ref. 3; AAD51006." evidence="27" ref="3">
    <original>E</original>
    <variation>G</variation>
    <location>
        <position position="640"/>
    </location>
</feature>
<feature type="helix" evidence="36">
    <location>
        <begin position="52"/>
        <end position="54"/>
    </location>
</feature>
<feature type="strand" evidence="35">
    <location>
        <begin position="57"/>
        <end position="67"/>
    </location>
</feature>
<feature type="helix" evidence="35">
    <location>
        <begin position="71"/>
        <end position="82"/>
    </location>
</feature>
<feature type="strand" evidence="35">
    <location>
        <begin position="87"/>
        <end position="93"/>
    </location>
</feature>
<feature type="helix" evidence="35">
    <location>
        <begin position="95"/>
        <end position="97"/>
    </location>
</feature>
<feature type="helix" evidence="35">
    <location>
        <begin position="99"/>
        <end position="102"/>
    </location>
</feature>
<feature type="strand" evidence="35">
    <location>
        <begin position="113"/>
        <end position="115"/>
    </location>
</feature>
<feature type="helix" evidence="35">
    <location>
        <begin position="119"/>
        <end position="129"/>
    </location>
</feature>
<feature type="turn" evidence="35">
    <location>
        <begin position="130"/>
        <end position="132"/>
    </location>
</feature>
<feature type="helix" evidence="35">
    <location>
        <begin position="136"/>
        <end position="156"/>
    </location>
</feature>
<feature type="strand" evidence="35">
    <location>
        <begin position="166"/>
        <end position="168"/>
    </location>
</feature>
<feature type="strand" evidence="34">
    <location>
        <begin position="171"/>
        <end position="178"/>
    </location>
</feature>
<feature type="turn" evidence="35">
    <location>
        <begin position="179"/>
        <end position="182"/>
    </location>
</feature>
<feature type="strand" evidence="34">
    <location>
        <begin position="185"/>
        <end position="190"/>
    </location>
</feature>
<feature type="helix" evidence="35">
    <location>
        <begin position="196"/>
        <end position="209"/>
    </location>
</feature>
<feature type="turn" evidence="35">
    <location>
        <begin position="210"/>
        <end position="212"/>
    </location>
</feature>
<feature type="strand" evidence="35">
    <location>
        <begin position="214"/>
        <end position="217"/>
    </location>
</feature>
<feature type="strand" evidence="35">
    <location>
        <begin position="219"/>
        <end position="227"/>
    </location>
</feature>
<feature type="strand" evidence="35">
    <location>
        <begin position="230"/>
        <end position="238"/>
    </location>
</feature>
<feature type="turn" evidence="35">
    <location>
        <begin position="239"/>
        <end position="241"/>
    </location>
</feature>
<feature type="strand" evidence="35">
    <location>
        <begin position="244"/>
        <end position="254"/>
    </location>
</feature>
<feature type="helix" evidence="35">
    <location>
        <begin position="260"/>
        <end position="262"/>
    </location>
</feature>
<feature type="strand" evidence="35">
    <location>
        <begin position="263"/>
        <end position="268"/>
    </location>
</feature>
<feature type="helix" evidence="35">
    <location>
        <begin position="275"/>
        <end position="282"/>
    </location>
</feature>
<feature type="strand" evidence="35">
    <location>
        <begin position="293"/>
        <end position="300"/>
    </location>
</feature>
<feature type="turn" evidence="35">
    <location>
        <begin position="301"/>
        <end position="303"/>
    </location>
</feature>
<feature type="helix" evidence="35">
    <location>
        <begin position="310"/>
        <end position="313"/>
    </location>
</feature>
<feature type="strand" evidence="35">
    <location>
        <begin position="317"/>
        <end position="319"/>
    </location>
</feature>
<feature type="helix" evidence="35">
    <location>
        <begin position="327"/>
        <end position="330"/>
    </location>
</feature>
<feature type="turn" evidence="35">
    <location>
        <begin position="332"/>
        <end position="334"/>
    </location>
</feature>
<feature type="helix" evidence="35">
    <location>
        <begin position="335"/>
        <end position="337"/>
    </location>
</feature>
<feature type="helix" evidence="35">
    <location>
        <begin position="340"/>
        <end position="352"/>
    </location>
</feature>
<feature type="turn" evidence="35">
    <location>
        <begin position="358"/>
        <end position="361"/>
    </location>
</feature>
<feature type="strand" evidence="35">
    <location>
        <begin position="363"/>
        <end position="367"/>
    </location>
</feature>
<feature type="helix" evidence="35">
    <location>
        <begin position="373"/>
        <end position="379"/>
    </location>
</feature>
<feature type="helix" evidence="35">
    <location>
        <begin position="383"/>
        <end position="391"/>
    </location>
</feature>
<feature type="turn" evidence="35">
    <location>
        <begin position="395"/>
        <end position="397"/>
    </location>
</feature>
<feature type="strand" evidence="35">
    <location>
        <begin position="400"/>
        <end position="409"/>
    </location>
</feature>
<feature type="strand" evidence="35">
    <location>
        <begin position="412"/>
        <end position="415"/>
    </location>
</feature>
<feature type="strand" evidence="35">
    <location>
        <begin position="419"/>
        <end position="425"/>
    </location>
</feature>
<feature type="strand" evidence="35">
    <location>
        <begin position="428"/>
        <end position="437"/>
    </location>
</feature>
<feature type="helix" evidence="35">
    <location>
        <begin position="439"/>
        <end position="441"/>
    </location>
</feature>
<feature type="strand" evidence="35">
    <location>
        <begin position="445"/>
        <end position="447"/>
    </location>
</feature>
<feature type="helix" evidence="35">
    <location>
        <begin position="456"/>
        <end position="474"/>
    </location>
</feature>
<feature type="turn" evidence="35">
    <location>
        <begin position="486"/>
        <end position="489"/>
    </location>
</feature>
<feature type="helix" evidence="35">
    <location>
        <begin position="490"/>
        <end position="500"/>
    </location>
</feature>
<feature type="strand" evidence="35">
    <location>
        <begin position="503"/>
        <end position="507"/>
    </location>
</feature>
<feature type="helix" evidence="35">
    <location>
        <begin position="508"/>
        <end position="522"/>
    </location>
</feature>
<feature type="strand" evidence="35">
    <location>
        <begin position="523"/>
        <end position="525"/>
    </location>
</feature>
<feature type="helix" evidence="35">
    <location>
        <begin position="529"/>
        <end position="545"/>
    </location>
</feature>
<feature type="helix" evidence="35">
    <location>
        <begin position="546"/>
        <end position="548"/>
    </location>
</feature>
<feature type="strand" evidence="35">
    <location>
        <begin position="556"/>
        <end position="558"/>
    </location>
</feature>
<feature type="helix" evidence="35">
    <location>
        <begin position="560"/>
        <end position="584"/>
    </location>
</feature>
<feature type="strand" evidence="35">
    <location>
        <begin position="594"/>
        <end position="597"/>
    </location>
</feature>
<feature type="strand" evidence="36">
    <location>
        <begin position="610"/>
        <end position="612"/>
    </location>
</feature>
<feature type="helix" evidence="35">
    <location>
        <begin position="618"/>
        <end position="620"/>
    </location>
</feature>
<feature type="strand" evidence="35">
    <location>
        <begin position="624"/>
        <end position="631"/>
    </location>
</feature>
<feature type="turn" evidence="35">
    <location>
        <begin position="632"/>
        <end position="635"/>
    </location>
</feature>
<feature type="strand" evidence="35">
    <location>
        <begin position="636"/>
        <end position="643"/>
    </location>
</feature>
<feature type="turn" evidence="35">
    <location>
        <begin position="651"/>
        <end position="653"/>
    </location>
</feature>
<dbReference type="EC" id="1.3.5.1" evidence="5 28"/>
<dbReference type="EC" id="1.1.5.-" evidence="1"/>
<dbReference type="EMBL" id="D30648">
    <property type="protein sequence ID" value="BAA06332.1"/>
    <property type="molecule type" value="mRNA"/>
</dbReference>
<dbReference type="EMBL" id="L21936">
    <property type="protein sequence ID" value="AAA20683.1"/>
    <property type="molecule type" value="mRNA"/>
</dbReference>
<dbReference type="EMBL" id="AF171030">
    <property type="protein sequence ID" value="AAD51006.1"/>
    <property type="molecule type" value="Genomic_DNA"/>
</dbReference>
<dbReference type="EMBL" id="AF171017">
    <property type="protein sequence ID" value="AAD51006.1"/>
    <property type="status" value="JOINED"/>
    <property type="molecule type" value="Genomic_DNA"/>
</dbReference>
<dbReference type="EMBL" id="AF171018">
    <property type="protein sequence ID" value="AAD51006.1"/>
    <property type="status" value="JOINED"/>
    <property type="molecule type" value="Genomic_DNA"/>
</dbReference>
<dbReference type="EMBL" id="AF171019">
    <property type="protein sequence ID" value="AAD51006.1"/>
    <property type="status" value="JOINED"/>
    <property type="molecule type" value="Genomic_DNA"/>
</dbReference>
<dbReference type="EMBL" id="AF171020">
    <property type="protein sequence ID" value="AAD51006.1"/>
    <property type="status" value="JOINED"/>
    <property type="molecule type" value="Genomic_DNA"/>
</dbReference>
<dbReference type="EMBL" id="AF171021">
    <property type="protein sequence ID" value="AAD51006.1"/>
    <property type="status" value="JOINED"/>
    <property type="molecule type" value="Genomic_DNA"/>
</dbReference>
<dbReference type="EMBL" id="AF171022">
    <property type="protein sequence ID" value="AAD51006.1"/>
    <property type="status" value="JOINED"/>
    <property type="molecule type" value="Genomic_DNA"/>
</dbReference>
<dbReference type="EMBL" id="AF171023">
    <property type="protein sequence ID" value="AAD51006.1"/>
    <property type="status" value="JOINED"/>
    <property type="molecule type" value="Genomic_DNA"/>
</dbReference>
<dbReference type="EMBL" id="AF171024">
    <property type="protein sequence ID" value="AAD51006.1"/>
    <property type="status" value="JOINED"/>
    <property type="molecule type" value="Genomic_DNA"/>
</dbReference>
<dbReference type="EMBL" id="AF171025">
    <property type="protein sequence ID" value="AAD51006.1"/>
    <property type="status" value="JOINED"/>
    <property type="molecule type" value="Genomic_DNA"/>
</dbReference>
<dbReference type="EMBL" id="AF171026">
    <property type="protein sequence ID" value="AAD51006.1"/>
    <property type="status" value="JOINED"/>
    <property type="molecule type" value="Genomic_DNA"/>
</dbReference>
<dbReference type="EMBL" id="AF171027">
    <property type="protein sequence ID" value="AAD51006.1"/>
    <property type="status" value="JOINED"/>
    <property type="molecule type" value="Genomic_DNA"/>
</dbReference>
<dbReference type="EMBL" id="AF171028">
    <property type="protein sequence ID" value="AAD51006.1"/>
    <property type="status" value="JOINED"/>
    <property type="molecule type" value="Genomic_DNA"/>
</dbReference>
<dbReference type="EMBL" id="AF171029">
    <property type="protein sequence ID" value="AAD51006.1"/>
    <property type="status" value="JOINED"/>
    <property type="molecule type" value="Genomic_DNA"/>
</dbReference>
<dbReference type="EMBL" id="AK291311">
    <property type="protein sequence ID" value="BAF84000.1"/>
    <property type="molecule type" value="mRNA"/>
</dbReference>
<dbReference type="EMBL" id="AK295937">
    <property type="protein sequence ID" value="BAG58722.1"/>
    <property type="molecule type" value="mRNA"/>
</dbReference>
<dbReference type="EMBL" id="AB208991">
    <property type="protein sequence ID" value="BAD92228.1"/>
    <property type="status" value="ALT_INIT"/>
    <property type="molecule type" value="mRNA"/>
</dbReference>
<dbReference type="EMBL" id="AC021087">
    <property type="status" value="NOT_ANNOTATED_CDS"/>
    <property type="molecule type" value="Genomic_DNA"/>
</dbReference>
<dbReference type="EMBL" id="CH471235">
    <property type="protein sequence ID" value="EAW50983.1"/>
    <property type="molecule type" value="Genomic_DNA"/>
</dbReference>
<dbReference type="EMBL" id="BC001380">
    <property type="protein sequence ID" value="AAH01380.1"/>
    <property type="molecule type" value="mRNA"/>
</dbReference>
<dbReference type="EMBL" id="BC041016">
    <property type="protein sequence ID" value="AAH41016.1"/>
    <property type="molecule type" value="mRNA"/>
</dbReference>
<dbReference type="EMBL" id="X53943">
    <property type="protein sequence ID" value="CAA37886.1"/>
    <property type="status" value="ALT_SEQ"/>
    <property type="molecule type" value="mRNA"/>
</dbReference>
<dbReference type="EMBL" id="S79641">
    <property type="protein sequence ID" value="AAB35332.1"/>
    <property type="molecule type" value="Genomic_DNA"/>
</dbReference>
<dbReference type="CCDS" id="CCDS3853.1">
    <molecule id="P31040-1"/>
</dbReference>
<dbReference type="CCDS" id="CCDS77992.1">
    <molecule id="P31040-2"/>
</dbReference>
<dbReference type="PIR" id="JX0336">
    <property type="entry name" value="JX0336"/>
</dbReference>
<dbReference type="PIR" id="S21302">
    <property type="entry name" value="S21302"/>
</dbReference>
<dbReference type="RefSeq" id="NP_001281261.1">
    <molecule id="P31040-2"/>
    <property type="nucleotide sequence ID" value="NM_001294332.2"/>
</dbReference>
<dbReference type="RefSeq" id="NP_004159.2">
    <molecule id="P31040-1"/>
    <property type="nucleotide sequence ID" value="NM_004168.4"/>
</dbReference>
<dbReference type="PDB" id="6VAX">
    <property type="method" value="X-ray"/>
    <property type="resolution" value="2.59 A"/>
    <property type="chains" value="A/C=44-664"/>
</dbReference>
<dbReference type="PDB" id="8DYD">
    <property type="method" value="X-ray"/>
    <property type="resolution" value="1.52 A"/>
    <property type="chains" value="A=44-664"/>
</dbReference>
<dbReference type="PDB" id="8DYE">
    <property type="method" value="X-ray"/>
    <property type="resolution" value="1.44 A"/>
    <property type="chains" value="A=54-664"/>
</dbReference>
<dbReference type="PDB" id="8GS8">
    <property type="method" value="EM"/>
    <property type="resolution" value="2.86 A"/>
    <property type="chains" value="A=1-664"/>
</dbReference>
<dbReference type="PDBsum" id="6VAX"/>
<dbReference type="PDBsum" id="8DYD"/>
<dbReference type="PDBsum" id="8DYE"/>
<dbReference type="PDBsum" id="8GS8"/>
<dbReference type="EMDB" id="EMD-34225"/>
<dbReference type="SMR" id="P31040"/>
<dbReference type="BioGRID" id="112290">
    <property type="interactions" value="414"/>
</dbReference>
<dbReference type="ComplexPortal" id="CPX-561">
    <property type="entry name" value="Mitochondrial respiratory chain complex II"/>
</dbReference>
<dbReference type="CORUM" id="P31040"/>
<dbReference type="DIP" id="DIP-45851N"/>
<dbReference type="FunCoup" id="P31040">
    <property type="interactions" value="1492"/>
</dbReference>
<dbReference type="IntAct" id="P31040">
    <property type="interactions" value="231"/>
</dbReference>
<dbReference type="MINT" id="P31040"/>
<dbReference type="STRING" id="9606.ENSP00000264932"/>
<dbReference type="BindingDB" id="P31040"/>
<dbReference type="ChEMBL" id="CHEMBL5758"/>
<dbReference type="DrugBank" id="DB04141">
    <property type="generic name" value="2-Hexyloxy-6-Hydroxymethyl-Tetrahydro-Pyran-3,4,5-Triol"/>
</dbReference>
<dbReference type="DrugBank" id="DB04657">
    <property type="generic name" value="Carboxin"/>
</dbReference>
<dbReference type="DrugBank" id="DB00139">
    <property type="generic name" value="Succinic acid"/>
</dbReference>
<dbReference type="DrugBank" id="DB04795">
    <property type="generic name" value="Thenoyltrifluoroacetone"/>
</dbReference>
<dbReference type="DrugBank" id="DB09270">
    <property type="generic name" value="Ubidecarenone"/>
</dbReference>
<dbReference type="DrugBank" id="DB08689">
    <property type="generic name" value="Ubiquinone Q1"/>
</dbReference>
<dbReference type="DrugCentral" id="P31040"/>
<dbReference type="TCDB" id="3.D.10.1.7">
    <property type="family name" value="the prokaryotic succinate dehydrogenase (sdh) family"/>
</dbReference>
<dbReference type="GlyGen" id="P31040">
    <property type="glycosylation" value="1 site, 1 O-linked glycan (1 site)"/>
</dbReference>
<dbReference type="iPTMnet" id="P31040"/>
<dbReference type="MetOSite" id="P31040"/>
<dbReference type="PhosphoSitePlus" id="P31040"/>
<dbReference type="SwissPalm" id="P31040"/>
<dbReference type="BioMuta" id="SDHA"/>
<dbReference type="DMDM" id="1169337"/>
<dbReference type="REPRODUCTION-2DPAGE" id="IPI00305166"/>
<dbReference type="CPTAC" id="CPTAC-440"/>
<dbReference type="jPOST" id="P31040"/>
<dbReference type="MassIVE" id="P31040"/>
<dbReference type="PaxDb" id="9606-ENSP00000264932"/>
<dbReference type="PeptideAtlas" id="P31040"/>
<dbReference type="ProteomicsDB" id="19239"/>
<dbReference type="ProteomicsDB" id="54758">
    <molecule id="P31040-1"/>
</dbReference>
<dbReference type="Pumba" id="P31040"/>
<dbReference type="TopDownProteomics" id="P31040-1">
    <molecule id="P31040-1"/>
</dbReference>
<dbReference type="Antibodypedia" id="22208">
    <property type="antibodies" value="413 antibodies from 35 providers"/>
</dbReference>
<dbReference type="DNASU" id="6389"/>
<dbReference type="Ensembl" id="ENST00000264932.11">
    <molecule id="P31040-1"/>
    <property type="protein sequence ID" value="ENSP00000264932.6"/>
    <property type="gene ID" value="ENSG00000073578.18"/>
</dbReference>
<dbReference type="Ensembl" id="ENST00000510361.5">
    <molecule id="P31040-2"/>
    <property type="protein sequence ID" value="ENSP00000427703.1"/>
    <property type="gene ID" value="ENSG00000073578.18"/>
</dbReference>
<dbReference type="GeneID" id="6389"/>
<dbReference type="KEGG" id="hsa:6389"/>
<dbReference type="MANE-Select" id="ENST00000264932.11">
    <property type="protein sequence ID" value="ENSP00000264932.6"/>
    <property type="RefSeq nucleotide sequence ID" value="NM_004168.4"/>
    <property type="RefSeq protein sequence ID" value="NP_004159.2"/>
</dbReference>
<dbReference type="UCSC" id="uc003jao.5">
    <molecule id="P31040-1"/>
    <property type="organism name" value="human"/>
</dbReference>
<dbReference type="AGR" id="HGNC:10680"/>
<dbReference type="CTD" id="6389"/>
<dbReference type="DisGeNET" id="6389"/>
<dbReference type="GeneCards" id="SDHA"/>
<dbReference type="GeneReviews" id="SDHA"/>
<dbReference type="HGNC" id="HGNC:10680">
    <property type="gene designation" value="SDHA"/>
</dbReference>
<dbReference type="HPA" id="ENSG00000073578">
    <property type="expression patterns" value="Tissue enhanced (heart muscle, skeletal muscle)"/>
</dbReference>
<dbReference type="MalaCards" id="SDHA"/>
<dbReference type="MIM" id="252011">
    <property type="type" value="phenotype"/>
</dbReference>
<dbReference type="MIM" id="256000">
    <property type="type" value="phenotype"/>
</dbReference>
<dbReference type="MIM" id="600857">
    <property type="type" value="gene"/>
</dbReference>
<dbReference type="MIM" id="613642">
    <property type="type" value="phenotype"/>
</dbReference>
<dbReference type="MIM" id="614165">
    <property type="type" value="phenotype"/>
</dbReference>
<dbReference type="MIM" id="619259">
    <property type="type" value="phenotype"/>
</dbReference>
<dbReference type="neXtProt" id="NX_P31040"/>
<dbReference type="OpenTargets" id="ENSG00000073578"/>
<dbReference type="Orphanet" id="154">
    <property type="disease" value="Familial isolated dilated cardiomyopathy"/>
</dbReference>
<dbReference type="Orphanet" id="44890">
    <property type="disease" value="Gastrointestinal stromal tumor"/>
</dbReference>
<dbReference type="Orphanet" id="29072">
    <property type="disease" value="Hereditary pheochromocytoma-paraganglioma"/>
</dbReference>
<dbReference type="Orphanet" id="3208">
    <property type="disease" value="Isolated succinate-CoQ reductase deficiency"/>
</dbReference>
<dbReference type="PharmGKB" id="PA35605"/>
<dbReference type="VEuPathDB" id="HostDB:ENSG00000073578"/>
<dbReference type="eggNOG" id="KOG2403">
    <property type="taxonomic scope" value="Eukaryota"/>
</dbReference>
<dbReference type="GeneTree" id="ENSGT00910000144277"/>
<dbReference type="InParanoid" id="P31040"/>
<dbReference type="OMA" id="PTGIWRM"/>
<dbReference type="OrthoDB" id="71672at2759"/>
<dbReference type="PAN-GO" id="P31040">
    <property type="GO annotations" value="5 GO annotations based on evolutionary models"/>
</dbReference>
<dbReference type="PhylomeDB" id="P31040"/>
<dbReference type="TreeFam" id="TF300763"/>
<dbReference type="BioCyc" id="MetaCyc:ENSG00000073578-MONOMER"/>
<dbReference type="PathwayCommons" id="P31040"/>
<dbReference type="Reactome" id="R-HSA-611105">
    <property type="pathway name" value="Respiratory electron transport"/>
</dbReference>
<dbReference type="Reactome" id="R-HSA-71403">
    <property type="pathway name" value="Citric acid cycle (TCA cycle)"/>
</dbReference>
<dbReference type="Reactome" id="R-HSA-9854311">
    <property type="pathway name" value="Maturation of TCA enzymes and regulation of TCA cycle"/>
</dbReference>
<dbReference type="SignaLink" id="P31040"/>
<dbReference type="SIGNOR" id="P31040"/>
<dbReference type="UniPathway" id="UPA00223">
    <property type="reaction ID" value="UER01006"/>
</dbReference>
<dbReference type="BioGRID-ORCS" id="6389">
    <property type="hits" value="240 hits in 1171 CRISPR screens"/>
</dbReference>
<dbReference type="ChiTaRS" id="SDHA">
    <property type="organism name" value="human"/>
</dbReference>
<dbReference type="GeneWiki" id="SDHA"/>
<dbReference type="GenomeRNAi" id="6389"/>
<dbReference type="Pharos" id="P31040">
    <property type="development level" value="Tbio"/>
</dbReference>
<dbReference type="PRO" id="PR:P31040"/>
<dbReference type="Proteomes" id="UP000005640">
    <property type="component" value="Chromosome 5"/>
</dbReference>
<dbReference type="RNAct" id="P31040">
    <property type="molecule type" value="protein"/>
</dbReference>
<dbReference type="Bgee" id="ENSG00000073578">
    <property type="expression patterns" value="Expressed in apex of heart and 97 other cell types or tissues"/>
</dbReference>
<dbReference type="ExpressionAtlas" id="P31040">
    <property type="expression patterns" value="baseline and differential"/>
</dbReference>
<dbReference type="GO" id="GO:0005743">
    <property type="term" value="C:mitochondrial inner membrane"/>
    <property type="evidence" value="ECO:0000250"/>
    <property type="project" value="UniProtKB"/>
</dbReference>
<dbReference type="GO" id="GO:0005759">
    <property type="term" value="C:mitochondrial matrix"/>
    <property type="evidence" value="ECO:0000304"/>
    <property type="project" value="Reactome"/>
</dbReference>
<dbReference type="GO" id="GO:0005739">
    <property type="term" value="C:mitochondrion"/>
    <property type="evidence" value="ECO:0000314"/>
    <property type="project" value="HPA"/>
</dbReference>
<dbReference type="GO" id="GO:0005730">
    <property type="term" value="C:nucleolus"/>
    <property type="evidence" value="ECO:0000314"/>
    <property type="project" value="HPA"/>
</dbReference>
<dbReference type="GO" id="GO:0045273">
    <property type="term" value="C:respiratory chain complex II (succinate dehydrogenase)"/>
    <property type="evidence" value="ECO:0000314"/>
    <property type="project" value="UniProtKB"/>
</dbReference>
<dbReference type="GO" id="GO:0009055">
    <property type="term" value="F:electron transfer activity"/>
    <property type="evidence" value="ECO:0000318"/>
    <property type="project" value="GO_Central"/>
</dbReference>
<dbReference type="GO" id="GO:0050660">
    <property type="term" value="F:flavin adenine dinucleotide binding"/>
    <property type="evidence" value="ECO:0000318"/>
    <property type="project" value="GO_Central"/>
</dbReference>
<dbReference type="GO" id="GO:0008177">
    <property type="term" value="F:succinate dehydrogenase (quinone) activity"/>
    <property type="evidence" value="ECO:0000315"/>
    <property type="project" value="UniProtKB"/>
</dbReference>
<dbReference type="GO" id="GO:0006121">
    <property type="term" value="P:mitochondrial electron transport, succinate to ubiquinone"/>
    <property type="evidence" value="ECO:0000318"/>
    <property type="project" value="GO_Central"/>
</dbReference>
<dbReference type="GO" id="GO:0007399">
    <property type="term" value="P:nervous system development"/>
    <property type="evidence" value="ECO:0000315"/>
    <property type="project" value="UniProtKB"/>
</dbReference>
<dbReference type="GO" id="GO:0042776">
    <property type="term" value="P:proton motive force-driven mitochondrial ATP synthesis"/>
    <property type="evidence" value="ECO:0000303"/>
    <property type="project" value="ComplexPortal"/>
</dbReference>
<dbReference type="GO" id="GO:0022904">
    <property type="term" value="P:respiratory electron transport chain"/>
    <property type="evidence" value="ECO:0000314"/>
    <property type="project" value="UniProtKB"/>
</dbReference>
<dbReference type="GO" id="GO:0006105">
    <property type="term" value="P:succinate metabolic process"/>
    <property type="evidence" value="ECO:0000314"/>
    <property type="project" value="UniProtKB"/>
</dbReference>
<dbReference type="GO" id="GO:0006099">
    <property type="term" value="P:tricarboxylic acid cycle"/>
    <property type="evidence" value="ECO:0000304"/>
    <property type="project" value="UniProtKB"/>
</dbReference>
<dbReference type="FunFam" id="3.90.700.10:FF:000001">
    <property type="entry name" value="Mitochondrial succinate dehydrogenase flavoprotein subunit"/>
    <property type="match status" value="1"/>
</dbReference>
<dbReference type="FunFam" id="4.10.80.40:FF:000004">
    <property type="entry name" value="Succinate dehydrogenase [ubiquinone] flavoprotein subunit, mitochondrial"/>
    <property type="match status" value="1"/>
</dbReference>
<dbReference type="FunFam" id="3.50.50.60:FF:000482">
    <property type="entry name" value="Succinate dehydrogenase complex, subunit A, flavoprotein (Fp)"/>
    <property type="match status" value="1"/>
</dbReference>
<dbReference type="FunFam" id="3.50.50.60:FF:001062">
    <property type="entry name" value="Succinate dehydrogenase complex, subunit A, flavoprotein (Fp)"/>
    <property type="match status" value="1"/>
</dbReference>
<dbReference type="FunFam" id="1.20.58.100:FF:000001">
    <property type="entry name" value="Succinate dehydrogenase flavoprotein subunit (SdhA)"/>
    <property type="match status" value="1"/>
</dbReference>
<dbReference type="Gene3D" id="3.50.50.60">
    <property type="entry name" value="FAD/NAD(P)-binding domain"/>
    <property type="match status" value="1"/>
</dbReference>
<dbReference type="Gene3D" id="1.20.58.100">
    <property type="entry name" value="Fumarate reductase/succinate dehydrogenase flavoprotein-like, C-terminal domain"/>
    <property type="match status" value="1"/>
</dbReference>
<dbReference type="Gene3D" id="4.10.80.40">
    <property type="entry name" value="succinate dehydrogenase protein domain"/>
    <property type="match status" value="1"/>
</dbReference>
<dbReference type="Gene3D" id="3.90.700.10">
    <property type="entry name" value="Succinate dehydrogenase/fumarate reductase flavoprotein, catalytic domain"/>
    <property type="match status" value="1"/>
</dbReference>
<dbReference type="InterPro" id="IPR003953">
    <property type="entry name" value="FAD-dep_OxRdtase_2_FAD-bd"/>
</dbReference>
<dbReference type="InterPro" id="IPR036188">
    <property type="entry name" value="FAD/NAD-bd_sf"/>
</dbReference>
<dbReference type="InterPro" id="IPR003952">
    <property type="entry name" value="FRD_SDH_FAD_BS"/>
</dbReference>
<dbReference type="InterPro" id="IPR037099">
    <property type="entry name" value="Fum_R/Succ_DH_flav-like_C_sf"/>
</dbReference>
<dbReference type="InterPro" id="IPR015939">
    <property type="entry name" value="Fum_Rdtase/Succ_DH_flav-like_C"/>
</dbReference>
<dbReference type="InterPro" id="IPR030664">
    <property type="entry name" value="SdhA/FrdA/AprA"/>
</dbReference>
<dbReference type="InterPro" id="IPR027477">
    <property type="entry name" value="Succ_DH/fumarate_Rdtase_cat_sf"/>
</dbReference>
<dbReference type="InterPro" id="IPR011281">
    <property type="entry name" value="Succ_DH_flav_su_fwd"/>
</dbReference>
<dbReference type="InterPro" id="IPR014006">
    <property type="entry name" value="Succ_Dhase_FrdA_Gneg"/>
</dbReference>
<dbReference type="NCBIfam" id="TIGR01816">
    <property type="entry name" value="sdhA_forward"/>
    <property type="match status" value="1"/>
</dbReference>
<dbReference type="NCBIfam" id="TIGR01812">
    <property type="entry name" value="sdhA_frdA_Gneg"/>
    <property type="match status" value="1"/>
</dbReference>
<dbReference type="PANTHER" id="PTHR11632">
    <property type="entry name" value="SUCCINATE DEHYDROGENASE 2 FLAVOPROTEIN SUBUNIT"/>
    <property type="match status" value="1"/>
</dbReference>
<dbReference type="PANTHER" id="PTHR11632:SF51">
    <property type="entry name" value="SUCCINATE DEHYDROGENASE [UBIQUINONE] FLAVOPROTEIN SUBUNIT, MITOCHONDRIAL"/>
    <property type="match status" value="1"/>
</dbReference>
<dbReference type="Pfam" id="PF00890">
    <property type="entry name" value="FAD_binding_2"/>
    <property type="match status" value="1"/>
</dbReference>
<dbReference type="Pfam" id="PF02910">
    <property type="entry name" value="Succ_DH_flav_C"/>
    <property type="match status" value="1"/>
</dbReference>
<dbReference type="PIRSF" id="PIRSF000171">
    <property type="entry name" value="SDHA_APRA_LASPO"/>
    <property type="match status" value="1"/>
</dbReference>
<dbReference type="SUPFAM" id="SSF51905">
    <property type="entry name" value="FAD/NAD(P)-binding domain"/>
    <property type="match status" value="1"/>
</dbReference>
<dbReference type="SUPFAM" id="SSF46977">
    <property type="entry name" value="Succinate dehydrogenase/fumarate reductase flavoprotein C-terminal domain"/>
    <property type="match status" value="1"/>
</dbReference>
<dbReference type="SUPFAM" id="SSF56425">
    <property type="entry name" value="Succinate dehydrogenase/fumarate reductase flavoprotein, catalytic domain"/>
    <property type="match status" value="1"/>
</dbReference>
<dbReference type="PROSITE" id="PS00504">
    <property type="entry name" value="FRD_SDH_FAD_BINDING"/>
    <property type="match status" value="1"/>
</dbReference>
<reference key="1">
    <citation type="journal article" date="1994" name="J. Biochem.">
        <title>Human complex II (succinate-ubiquinone oxidoreductase): cDNA cloning of the flavoprotein (Fp) subunit of liver mitochondria.</title>
        <authorList>
            <person name="Hirawake H."/>
            <person name="Wang H."/>
            <person name="Kuramochi T."/>
            <person name="Kojima S."/>
            <person name="Kita K."/>
        </authorList>
    </citation>
    <scope>NUCLEOTIDE SEQUENCE [MRNA] (ISOFORM 1)</scope>
    <source>
        <tissue>Liver</tissue>
    </source>
</reference>
<reference key="2">
    <citation type="journal article" date="1994" name="Biochim. Biophys. Acta">
        <title>The cDNA sequence of the flavoprotein subunit of human heart succinate dehydrogenase.</title>
        <authorList>
            <person name="Morris A.A.M."/>
            <person name="Farnsworth L."/>
            <person name="Ackrell B.A.C."/>
            <person name="Turnbull D.M."/>
            <person name="Birch-MacHin M.A."/>
        </authorList>
    </citation>
    <scope>NUCLEOTIDE SEQUENCE [MRNA] (ISOFORM 1)</scope>
    <scope>VARIANTS PHE-629 AND ILE-657</scope>
    <source>
        <tissue>Heart</tissue>
    </source>
</reference>
<reference key="3">
    <citation type="journal article" date="2000" name="Hum. Genet.">
        <title>Compound heterozygous mutations in the flavoprotein gene of the respiratory chain complex II in a patient with Leigh syndrome.</title>
        <authorList>
            <person name="Parfait B."/>
            <person name="Chretien D."/>
            <person name="Roetig A."/>
            <person name="Marsac C."/>
            <person name="Munnich A."/>
            <person name="Rustin P."/>
        </authorList>
    </citation>
    <scope>NUCLEOTIDE SEQUENCE [GENOMIC DNA]</scope>
    <scope>FUNCTION</scope>
    <scope>CATALYTIC ACTIVITY</scope>
    <scope>VARIANT LS VAL-524</scope>
</reference>
<reference key="4">
    <citation type="journal article" date="2004" name="Nat. Genet.">
        <title>Complete sequencing and characterization of 21,243 full-length human cDNAs.</title>
        <authorList>
            <person name="Ota T."/>
            <person name="Suzuki Y."/>
            <person name="Nishikawa T."/>
            <person name="Otsuki T."/>
            <person name="Sugiyama T."/>
            <person name="Irie R."/>
            <person name="Wakamatsu A."/>
            <person name="Hayashi K."/>
            <person name="Sato H."/>
            <person name="Nagai K."/>
            <person name="Kimura K."/>
            <person name="Makita H."/>
            <person name="Sekine M."/>
            <person name="Obayashi M."/>
            <person name="Nishi T."/>
            <person name="Shibahara T."/>
            <person name="Tanaka T."/>
            <person name="Ishii S."/>
            <person name="Yamamoto J."/>
            <person name="Saito K."/>
            <person name="Kawai Y."/>
            <person name="Isono Y."/>
            <person name="Nakamura Y."/>
            <person name="Nagahari K."/>
            <person name="Murakami K."/>
            <person name="Yasuda T."/>
            <person name="Iwayanagi T."/>
            <person name="Wagatsuma M."/>
            <person name="Shiratori A."/>
            <person name="Sudo H."/>
            <person name="Hosoiri T."/>
            <person name="Kaku Y."/>
            <person name="Kodaira H."/>
            <person name="Kondo H."/>
            <person name="Sugawara M."/>
            <person name="Takahashi M."/>
            <person name="Kanda K."/>
            <person name="Yokoi T."/>
            <person name="Furuya T."/>
            <person name="Kikkawa E."/>
            <person name="Omura Y."/>
            <person name="Abe K."/>
            <person name="Kamihara K."/>
            <person name="Katsuta N."/>
            <person name="Sato K."/>
            <person name="Tanikawa M."/>
            <person name="Yamazaki M."/>
            <person name="Ninomiya K."/>
            <person name="Ishibashi T."/>
            <person name="Yamashita H."/>
            <person name="Murakawa K."/>
            <person name="Fujimori K."/>
            <person name="Tanai H."/>
            <person name="Kimata M."/>
            <person name="Watanabe M."/>
            <person name="Hiraoka S."/>
            <person name="Chiba Y."/>
            <person name="Ishida S."/>
            <person name="Ono Y."/>
            <person name="Takiguchi S."/>
            <person name="Watanabe S."/>
            <person name="Yosida M."/>
            <person name="Hotuta T."/>
            <person name="Kusano J."/>
            <person name="Kanehori K."/>
            <person name="Takahashi-Fujii A."/>
            <person name="Hara H."/>
            <person name="Tanase T.-O."/>
            <person name="Nomura Y."/>
            <person name="Togiya S."/>
            <person name="Komai F."/>
            <person name="Hara R."/>
            <person name="Takeuchi K."/>
            <person name="Arita M."/>
            <person name="Imose N."/>
            <person name="Musashino K."/>
            <person name="Yuuki H."/>
            <person name="Oshima A."/>
            <person name="Sasaki N."/>
            <person name="Aotsuka S."/>
            <person name="Yoshikawa Y."/>
            <person name="Matsunawa H."/>
            <person name="Ichihara T."/>
            <person name="Shiohata N."/>
            <person name="Sano S."/>
            <person name="Moriya S."/>
            <person name="Momiyama H."/>
            <person name="Satoh N."/>
            <person name="Takami S."/>
            <person name="Terashima Y."/>
            <person name="Suzuki O."/>
            <person name="Nakagawa S."/>
            <person name="Senoh A."/>
            <person name="Mizoguchi H."/>
            <person name="Goto Y."/>
            <person name="Shimizu F."/>
            <person name="Wakebe H."/>
            <person name="Hishigaki H."/>
            <person name="Watanabe T."/>
            <person name="Sugiyama A."/>
            <person name="Takemoto M."/>
            <person name="Kawakami B."/>
            <person name="Yamazaki M."/>
            <person name="Watanabe K."/>
            <person name="Kumagai A."/>
            <person name="Itakura S."/>
            <person name="Fukuzumi Y."/>
            <person name="Fujimori Y."/>
            <person name="Komiyama M."/>
            <person name="Tashiro H."/>
            <person name="Tanigami A."/>
            <person name="Fujiwara T."/>
            <person name="Ono T."/>
            <person name="Yamada K."/>
            <person name="Fujii Y."/>
            <person name="Ozaki K."/>
            <person name="Hirao M."/>
            <person name="Ohmori Y."/>
            <person name="Kawabata A."/>
            <person name="Hikiji T."/>
            <person name="Kobatake N."/>
            <person name="Inagaki H."/>
            <person name="Ikema Y."/>
            <person name="Okamoto S."/>
            <person name="Okitani R."/>
            <person name="Kawakami T."/>
            <person name="Noguchi S."/>
            <person name="Itoh T."/>
            <person name="Shigeta K."/>
            <person name="Senba T."/>
            <person name="Matsumura K."/>
            <person name="Nakajima Y."/>
            <person name="Mizuno T."/>
            <person name="Morinaga M."/>
            <person name="Sasaki M."/>
            <person name="Togashi T."/>
            <person name="Oyama M."/>
            <person name="Hata H."/>
            <person name="Watanabe M."/>
            <person name="Komatsu T."/>
            <person name="Mizushima-Sugano J."/>
            <person name="Satoh T."/>
            <person name="Shirai Y."/>
            <person name="Takahashi Y."/>
            <person name="Nakagawa K."/>
            <person name="Okumura K."/>
            <person name="Nagase T."/>
            <person name="Nomura N."/>
            <person name="Kikuchi H."/>
            <person name="Masuho Y."/>
            <person name="Yamashita R."/>
            <person name="Nakai K."/>
            <person name="Yada T."/>
            <person name="Nakamura Y."/>
            <person name="Ohara O."/>
            <person name="Isogai T."/>
            <person name="Sugano S."/>
        </authorList>
    </citation>
    <scope>NUCLEOTIDE SEQUENCE [LARGE SCALE MRNA] (ISOFORMS 1 AND 2)</scope>
    <scope>VARIANT VAL-38</scope>
    <source>
        <tissue>Substantia nigra</tissue>
        <tissue>Tongue</tissue>
    </source>
</reference>
<reference key="5">
    <citation type="submission" date="2005-03" db="EMBL/GenBank/DDBJ databases">
        <title>Homo sapiens protein coding cDNA.</title>
        <authorList>
            <person name="Totoki Y."/>
            <person name="Toyoda A."/>
            <person name="Takeda T."/>
            <person name="Sakaki Y."/>
            <person name="Tanaka A."/>
            <person name="Yokoyama S."/>
            <person name="Ohara O."/>
            <person name="Nagase T."/>
            <person name="Kikuno R.F."/>
        </authorList>
    </citation>
    <scope>NUCLEOTIDE SEQUENCE [LARGE SCALE MRNA] (ISOFORM 1)</scope>
    <scope>VARIANT PHE-629</scope>
    <source>
        <tissue>Brain</tissue>
    </source>
</reference>
<reference key="6">
    <citation type="journal article" date="2004" name="Nature">
        <title>The DNA sequence and comparative analysis of human chromosome 5.</title>
        <authorList>
            <person name="Schmutz J."/>
            <person name="Martin J."/>
            <person name="Terry A."/>
            <person name="Couronne O."/>
            <person name="Grimwood J."/>
            <person name="Lowry S."/>
            <person name="Gordon L.A."/>
            <person name="Scott D."/>
            <person name="Xie G."/>
            <person name="Huang W."/>
            <person name="Hellsten U."/>
            <person name="Tran-Gyamfi M."/>
            <person name="She X."/>
            <person name="Prabhakar S."/>
            <person name="Aerts A."/>
            <person name="Altherr M."/>
            <person name="Bajorek E."/>
            <person name="Black S."/>
            <person name="Branscomb E."/>
            <person name="Caoile C."/>
            <person name="Challacombe J.F."/>
            <person name="Chan Y.M."/>
            <person name="Denys M."/>
            <person name="Detter J.C."/>
            <person name="Escobar J."/>
            <person name="Flowers D."/>
            <person name="Fotopulos D."/>
            <person name="Glavina T."/>
            <person name="Gomez M."/>
            <person name="Gonzales E."/>
            <person name="Goodstein D."/>
            <person name="Grigoriev I."/>
            <person name="Groza M."/>
            <person name="Hammon N."/>
            <person name="Hawkins T."/>
            <person name="Haydu L."/>
            <person name="Israni S."/>
            <person name="Jett J."/>
            <person name="Kadner K."/>
            <person name="Kimball H."/>
            <person name="Kobayashi A."/>
            <person name="Lopez F."/>
            <person name="Lou Y."/>
            <person name="Martinez D."/>
            <person name="Medina C."/>
            <person name="Morgan J."/>
            <person name="Nandkeshwar R."/>
            <person name="Noonan J.P."/>
            <person name="Pitluck S."/>
            <person name="Pollard M."/>
            <person name="Predki P."/>
            <person name="Priest J."/>
            <person name="Ramirez L."/>
            <person name="Retterer J."/>
            <person name="Rodriguez A."/>
            <person name="Rogers S."/>
            <person name="Salamov A."/>
            <person name="Salazar A."/>
            <person name="Thayer N."/>
            <person name="Tice H."/>
            <person name="Tsai M."/>
            <person name="Ustaszewska A."/>
            <person name="Vo N."/>
            <person name="Wheeler J."/>
            <person name="Wu K."/>
            <person name="Yang J."/>
            <person name="Dickson M."/>
            <person name="Cheng J.-F."/>
            <person name="Eichler E.E."/>
            <person name="Olsen A."/>
            <person name="Pennacchio L.A."/>
            <person name="Rokhsar D.S."/>
            <person name="Richardson P."/>
            <person name="Lucas S.M."/>
            <person name="Myers R.M."/>
            <person name="Rubin E.M."/>
        </authorList>
    </citation>
    <scope>NUCLEOTIDE SEQUENCE [LARGE SCALE GENOMIC DNA]</scope>
</reference>
<reference key="7">
    <citation type="submission" date="2005-07" db="EMBL/GenBank/DDBJ databases">
        <authorList>
            <person name="Mural R.J."/>
            <person name="Istrail S."/>
            <person name="Sutton G.G."/>
            <person name="Florea L."/>
            <person name="Halpern A.L."/>
            <person name="Mobarry C.M."/>
            <person name="Lippert R."/>
            <person name="Walenz B."/>
            <person name="Shatkay H."/>
            <person name="Dew I."/>
            <person name="Miller J.R."/>
            <person name="Flanigan M.J."/>
            <person name="Edwards N.J."/>
            <person name="Bolanos R."/>
            <person name="Fasulo D."/>
            <person name="Halldorsson B.V."/>
            <person name="Hannenhalli S."/>
            <person name="Turner R."/>
            <person name="Yooseph S."/>
            <person name="Lu F."/>
            <person name="Nusskern D.R."/>
            <person name="Shue B.C."/>
            <person name="Zheng X.H."/>
            <person name="Zhong F."/>
            <person name="Delcher A.L."/>
            <person name="Huson D.H."/>
            <person name="Kravitz S.A."/>
            <person name="Mouchard L."/>
            <person name="Reinert K."/>
            <person name="Remington K.A."/>
            <person name="Clark A.G."/>
            <person name="Waterman M.S."/>
            <person name="Eichler E.E."/>
            <person name="Adams M.D."/>
            <person name="Hunkapiller M.W."/>
            <person name="Myers E.W."/>
            <person name="Venter J.C."/>
        </authorList>
    </citation>
    <scope>NUCLEOTIDE SEQUENCE [LARGE SCALE GENOMIC DNA]</scope>
</reference>
<reference key="8">
    <citation type="journal article" date="2004" name="Genome Res.">
        <title>The status, quality, and expansion of the NIH full-length cDNA project: the Mammalian Gene Collection (MGC).</title>
        <authorList>
            <consortium name="The MGC Project Team"/>
        </authorList>
    </citation>
    <scope>NUCLEOTIDE SEQUENCE [LARGE SCALE MRNA] (ISOFORMS 1 AND 3)</scope>
    <scope>VARIANT PHE-629</scope>
    <source>
        <tissue>Colon</tissue>
        <tissue>Placenta</tissue>
    </source>
</reference>
<reference key="9">
    <citation type="book" date="1991" name="Flavins and flavoproteins 1990">
        <title>Cloning of the flavoprotein subunit of human succinate dehydrogenase.</title>
        <editorList>
            <person name="Curti B."/>
            <person name="Ronchi S."/>
            <person name="Zanetti G."/>
        </editorList>
        <authorList>
            <person name="Malcovati M."/>
            <person name="Marchetti L."/>
            <person name="Zanelli E."/>
            <person name="Tenchini M.L."/>
        </authorList>
    </citation>
    <scope>PRELIMINARY PARTIAL NUCLEOTIDE SEQUENCE [MRNA]</scope>
    <source>
        <tissue>Placenta</tissue>
    </source>
</reference>
<reference key="10">
    <citation type="journal article" date="1995" name="Nat. Genet.">
        <title>Mutation of a nuclear succinate dehydrogenase gene results in mitochondrial respiratory chain deficiency.</title>
        <authorList>
            <person name="Bourgeron T."/>
            <person name="Rustin P."/>
            <person name="Chretien D."/>
            <person name="Birch-MacHin M.A."/>
            <person name="Bourgeois M."/>
            <person name="Viegas-Pequignot E."/>
            <person name="Munnich A."/>
            <person name="Roetig A."/>
        </authorList>
    </citation>
    <scope>NUCLEOTIDE SEQUENCE [GENOMIC DNA] OF 546-562</scope>
    <scope>VARIANT LS TRP-554</scope>
</reference>
<reference key="11">
    <citation type="journal article" date="2004" name="Biochem. J.">
        <title>Vectorial proteomics reveal targeting, phosphorylation and specific fragmentation of polymerase I and transcript release factor (PTRF) at the surface of caveolae in human adipocytes.</title>
        <authorList>
            <person name="Aboulaich N."/>
            <person name="Vainonen J.P."/>
            <person name="Stralfors P."/>
            <person name="Vener A.V."/>
        </authorList>
    </citation>
    <scope>PROTEIN SEQUENCE OF 76-92 AND 398-418</scope>
    <source>
        <tissue>Adipocyte</tissue>
    </source>
</reference>
<reference key="12">
    <citation type="journal article" date="2009" name="Science">
        <title>SDH5, a gene required for flavination of succinate dehydrogenase, is mutated in paraganglioma.</title>
        <authorList>
            <person name="Hao H.-X."/>
            <person name="Khalimonchuk O."/>
            <person name="Schraders M."/>
            <person name="Dephoure N."/>
            <person name="Bayley J.-P."/>
            <person name="Kunst H."/>
            <person name="Devilee P."/>
            <person name="Cremers C.W.R.J."/>
            <person name="Schiffman J.D."/>
            <person name="Bentz B.G."/>
            <person name="Gygi S.P."/>
            <person name="Winge D.R."/>
            <person name="Kremer H."/>
            <person name="Rutter J."/>
        </authorList>
    </citation>
    <scope>INTERACTION WITH SDHAF2</scope>
</reference>
<reference key="13">
    <citation type="journal article" date="2009" name="Science">
        <title>Lysine acetylation targets protein complexes and co-regulates major cellular functions.</title>
        <authorList>
            <person name="Choudhary C."/>
            <person name="Kumar C."/>
            <person name="Gnad F."/>
            <person name="Nielsen M.L."/>
            <person name="Rehman M."/>
            <person name="Walther T.C."/>
            <person name="Olsen J.V."/>
            <person name="Mann M."/>
        </authorList>
    </citation>
    <scope>ACETYLATION [LARGE SCALE ANALYSIS] AT LYS-179; LYS-335; LYS-541 AND LYS-608</scope>
    <scope>IDENTIFICATION BY MASS SPECTROMETRY [LARGE SCALE ANALYSIS]</scope>
</reference>
<reference key="14">
    <citation type="journal article" date="2010" name="Hum. Mol. Genet.">
        <title>SDHA is a tumor suppressor gene causing paraganglioma.</title>
        <authorList>
            <person name="Burnichon N."/>
            <person name="Briere J.J."/>
            <person name="Libe R."/>
            <person name="Vescovo L."/>
            <person name="Riviere J."/>
            <person name="Tissier F."/>
            <person name="Jouanno E."/>
            <person name="Jeunemaitre X."/>
            <person name="Benit P."/>
            <person name="Tzagoloff A."/>
            <person name="Rustin P."/>
            <person name="Bertherat J."/>
            <person name="Favier J."/>
            <person name="Gimenez-Roqueplo A.P."/>
        </authorList>
    </citation>
    <scope>FUNCTION</scope>
    <scope>VARIANT PPGL5 TRP-589</scope>
    <scope>CHARACTERIZATION OF VARIANT PPGL5 TRP-589</scope>
</reference>
<reference key="15">
    <citation type="journal article" date="2011" name="BMC Syst. Biol.">
        <title>Initial characterization of the human central proteome.</title>
        <authorList>
            <person name="Burkard T.R."/>
            <person name="Planyavsky M."/>
            <person name="Kaupe I."/>
            <person name="Breitwieser F.P."/>
            <person name="Buerckstuemmer T."/>
            <person name="Bennett K.L."/>
            <person name="Superti-Furga G."/>
            <person name="Colinge J."/>
        </authorList>
    </citation>
    <scope>IDENTIFICATION BY MASS SPECTROMETRY [LARGE SCALE ANALYSIS]</scope>
</reference>
<reference key="16">
    <citation type="journal article" date="2012" name="Biochem. J.">
        <title>Mitochondrial c-Src regulates cell survival through phosphorylation of respiratory chain components.</title>
        <authorList>
            <person name="Ogura M."/>
            <person name="Yamaki J."/>
            <person name="Homma M.K."/>
            <person name="Homma Y."/>
        </authorList>
    </citation>
    <scope>PHOSPHORYLATION AT TYR-215 BY SRC</scope>
</reference>
<reference key="17">
    <citation type="journal article" date="2013" name="Cell Metab.">
        <title>The mitochondrial chaperone TRAP1 promotes neoplastic growth by inhibiting succinate dehydrogenase.</title>
        <authorList>
            <person name="Sciacovelli M."/>
            <person name="Guzzo G."/>
            <person name="Morello V."/>
            <person name="Frezza C."/>
            <person name="Zheng L."/>
            <person name="Nannini N."/>
            <person name="Calabrese F."/>
            <person name="Laudiero G."/>
            <person name="Esposito F."/>
            <person name="Landriscina M."/>
            <person name="Defilippi P."/>
            <person name="Bernardi P."/>
            <person name="Rasola A."/>
        </authorList>
    </citation>
    <scope>INTERACTION WITH TRAP1</scope>
</reference>
<reference key="18">
    <citation type="journal article" date="2014" name="J. Proteomics">
        <title>An enzyme assisted RP-RPLC approach for in-depth analysis of human liver phosphoproteome.</title>
        <authorList>
            <person name="Bian Y."/>
            <person name="Song C."/>
            <person name="Cheng K."/>
            <person name="Dong M."/>
            <person name="Wang F."/>
            <person name="Huang J."/>
            <person name="Sun D."/>
            <person name="Wang L."/>
            <person name="Ye M."/>
            <person name="Zou H."/>
        </authorList>
    </citation>
    <scope>IDENTIFICATION BY MASS SPECTROMETRY [LARGE SCALE ANALYSIS]</scope>
    <source>
        <tissue>Liver</tissue>
    </source>
</reference>
<reference key="19">
    <citation type="journal article" date="2015" name="Proteomics">
        <title>N-terminome analysis of the human mitochondrial proteome.</title>
        <authorList>
            <person name="Vaca Jacome A.S."/>
            <person name="Rabilloud T."/>
            <person name="Schaeffer-Reiss C."/>
            <person name="Rompais M."/>
            <person name="Ayoub D."/>
            <person name="Lane L."/>
            <person name="Bairoch A."/>
            <person name="Van Dorsselaer A."/>
            <person name="Carapito C."/>
        </authorList>
    </citation>
    <scope>IDENTIFICATION BY MASS SPECTROMETRY [LARGE SCALE ANALYSIS]</scope>
</reference>
<reference key="20">
    <citation type="journal article" date="2017" name="Nat. Commun.">
        <title>Human LACC1 increases innate receptor-induced responses and a LACC1 disease-risk variant modulates these outcomes.</title>
        <authorList>
            <person name="Lahiri A."/>
            <person name="Hedl M."/>
            <person name="Yan J."/>
            <person name="Abraham C."/>
        </authorList>
    </citation>
    <scope>INTERACTION WITH LACC1</scope>
</reference>
<reference evidence="29" key="21">
    <citation type="journal article" date="2020" name="Proc. Natl. Acad. Sci. U.S.A.">
        <title>The roles of SDHAF2 and dicarboxylate in covalent flavinylation of SDHA, the human complex II flavoprotein.</title>
        <authorList>
            <person name="Sharma P."/>
            <person name="Maklashina E."/>
            <person name="Cecchini G."/>
            <person name="Iverson T.M."/>
        </authorList>
    </citation>
    <scope>X-RAY CRYSTALLOGRAPHY (2.59 ANGSTROMS) OF 44-664 IN COMPLEX WITH SDHAF2; FAD AND OXALOACETATE</scope>
    <scope>COFACTOR</scope>
    <scope>INTERACTION WITH SDHAF2</scope>
</reference>
<reference evidence="32" key="22">
    <citation type="journal article" date="2023" name="Proc. Natl. Acad. Sci. U.S.A.">
        <title>Structure of the human respiratory complex II.</title>
        <authorList>
            <person name="Du Z."/>
            <person name="Zhou X."/>
            <person name="Lai Y."/>
            <person name="Xu J."/>
            <person name="Zhang Y."/>
            <person name="Zhou S."/>
            <person name="Feng Z."/>
            <person name="Yu L."/>
            <person name="Tang Y."/>
            <person name="Wang W."/>
            <person name="Yu L."/>
            <person name="Tian C."/>
            <person name="Ran T."/>
            <person name="Chen H."/>
            <person name="Guddat L.W."/>
            <person name="Liu F."/>
            <person name="Gao Y."/>
            <person name="Rao Z."/>
            <person name="Gong H."/>
        </authorList>
    </citation>
    <scope>STRUCTURE BY ELECTRON MICROSCOPY (2.86 ANGSTROMS) IN COMPLEX WITH FAD</scope>
    <scope>COFACTOR</scope>
    <scope>SUBUNIT</scope>
    <scope>SUBCELLULAR LOCATION</scope>
</reference>
<reference key="23">
    <citation type="journal article" date="2000" name="Ann. Neurol.">
        <title>Late-onset optic atrophy, ataxia, and myopathy associated with a mutation of a complex II gene.</title>
        <authorList>
            <person name="Birch-Machin M.A."/>
            <person name="Taylor R.W."/>
            <person name="Cochran B."/>
            <person name="Ackrell B.A."/>
            <person name="Turnbull D.M."/>
        </authorList>
    </citation>
    <scope>INVOLVEMENT IN NDAXOA</scope>
    <scope>VARIANT NDAXOA CYS-451</scope>
</reference>
<reference key="24">
    <citation type="journal article" date="2003" name="Am. J. Med. Genet. A">
        <title>Homozygous Gly555Glu mutation in the nuclear-encoded 70 kDa flavoprotein gene causes instability of the respiratory chain complex II.</title>
        <authorList>
            <person name="Van Coster R."/>
            <person name="Seneca S."/>
            <person name="Smet J."/>
            <person name="Van Hecke R."/>
            <person name="Gerlo E."/>
            <person name="Devreese B."/>
            <person name="Van Beeumen J."/>
            <person name="Leroy J.G."/>
            <person name="De Meirleir L."/>
            <person name="Lissens W."/>
        </authorList>
    </citation>
    <scope>VARIANT MC2DN1 GLU-555</scope>
</reference>
<reference key="25">
    <citation type="journal article" date="2010" name="Eur. J. Hum. Genet.">
        <title>Familial neonatal isolated cardiomyopathy caused by a mutation in the flavoprotein subunit of succinate dehydrogenase.</title>
        <authorList>
            <person name="Levitas A."/>
            <person name="Muhammad E."/>
            <person name="Harel G."/>
            <person name="Saada A."/>
            <person name="Caspi V.C."/>
            <person name="Manor E."/>
            <person name="Beck J.C."/>
            <person name="Sheffield V."/>
            <person name="Parvari R."/>
        </authorList>
    </citation>
    <scope>VARIANT CMD1GG GLU-555</scope>
</reference>
<reference key="26">
    <citation type="journal article" date="2015" name="Eur. J. Hum. Genet.">
        <title>SDHA mutations causing a multisystem mitochondrial disease: novel mutations and genetic overlap with hereditary tumors.</title>
        <authorList>
            <person name="Renkema G.H."/>
            <person name="Wortmann S.B."/>
            <person name="Smeets R.J."/>
            <person name="Venselaar H."/>
            <person name="Antoine M."/>
            <person name="Visser G."/>
            <person name="Ben-Omran T."/>
            <person name="van den Heuvel L.P."/>
            <person name="Timmers H.J."/>
            <person name="Smeitink J.A."/>
            <person name="Rodenburg R.J."/>
        </authorList>
    </citation>
    <scope>VARIANT LS GLY-189</scope>
    <scope>CHARACTERIZATION OF VARIANT LS GLY-189</scope>
    <scope>FUNCTION</scope>
    <scope>CATALYTIC ACTIVITY</scope>
    <scope>PATHWAY</scope>
</reference>
<reference key="27">
    <citation type="journal article" date="2012" name="J. Med. Genet.">
        <title>Recessive germline SDHA and SDHB mutations causing leukodystrophy and isolated mitochondrial complex II deficiency.</title>
        <authorList>
            <person name="Alston C.L."/>
            <person name="Davison J.E."/>
            <person name="Meloni F."/>
            <person name="van der Westhuizen F.H."/>
            <person name="He L."/>
            <person name="Hornig-Do H.T."/>
            <person name="Peet A.C."/>
            <person name="Gissen P."/>
            <person name="Goffrini P."/>
            <person name="Ferrero I."/>
            <person name="Wassmer E."/>
            <person name="McFarland R."/>
            <person name="Taylor R.W."/>
        </authorList>
    </citation>
    <scope>VARIANT ILE-508</scope>
    <scope>VARIANT MC2DN1 LEU-509</scope>
</reference>
<reference key="28">
    <citation type="journal article" date="2016" name="Ann. Neurol.">
        <title>Magnetic resonance imaging spectrum of succinate dehydrogenase-related infantile leukoencephalopathy.</title>
        <authorList>
            <consortium name="SDH Study Group"/>
            <person name="Helman G."/>
            <person name="Caldovic L."/>
            <person name="Whitehead M.T."/>
            <person name="Simons C."/>
            <person name="Brockmann K."/>
            <person name="Edvardson S."/>
            <person name="Bai R."/>
            <person name="Moroni I."/>
            <person name="Taylor J.M."/>
            <person name="Van Haren K."/>
            <person name="Taft R.J."/>
            <person name="Vanderver A."/>
            <person name="van der Knaap M.S."/>
        </authorList>
    </citation>
    <scope>VARIANT ILE-508</scope>
    <scope>VARIANT MC2DN1 LEU-509</scope>
</reference>
<reference key="29">
    <citation type="journal article" date="2017" name="Am. J. Med. Genet. A">
        <title>SDHA mutation with dominant transmission results in complex II deficiency with ocular, cardiac, and neurologic involvement.</title>
        <authorList>
            <person name="Courage C."/>
            <person name="Jackson C.B."/>
            <person name="Hahn D."/>
            <person name="Euro L."/>
            <person name="Nuoffer J.M."/>
            <person name="Gallati S."/>
            <person name="Schaller A."/>
        </authorList>
    </citation>
    <scope>VARIANT NDAXOA CYS-451</scope>
</reference>
<accession>P31040</accession>
<accession>A8K5J6</accession>
<accession>B4DJ60</accession>
<accession>E9PBJ5</accession>
<accession>Q16395</accession>
<accession>Q59GW8</accession>
<accession>Q8IW48</accession>
<accession>Q9UMY5</accession>
<organism>
    <name type="scientific">Homo sapiens</name>
    <name type="common">Human</name>
    <dbReference type="NCBI Taxonomy" id="9606"/>
    <lineage>
        <taxon>Eukaryota</taxon>
        <taxon>Metazoa</taxon>
        <taxon>Chordata</taxon>
        <taxon>Craniata</taxon>
        <taxon>Vertebrata</taxon>
        <taxon>Euteleostomi</taxon>
        <taxon>Mammalia</taxon>
        <taxon>Eutheria</taxon>
        <taxon>Euarchontoglires</taxon>
        <taxon>Primates</taxon>
        <taxon>Haplorrhini</taxon>
        <taxon>Catarrhini</taxon>
        <taxon>Hominidae</taxon>
        <taxon>Homo</taxon>
    </lineage>
</organism>
<gene>
    <name type="primary">SDHA</name>
    <name type="synonym">SDH2</name>
    <name type="synonym">SDHF</name>
</gene>
<evidence type="ECO:0000250" key="1">
    <source>
        <dbReference type="UniProtKB" id="P31039"/>
    </source>
</evidence>
<evidence type="ECO:0000250" key="2">
    <source>
        <dbReference type="UniProtKB" id="Q0QF01"/>
    </source>
</evidence>
<evidence type="ECO:0000250" key="3">
    <source>
        <dbReference type="UniProtKB" id="Q8K2B3"/>
    </source>
</evidence>
<evidence type="ECO:0000250" key="4">
    <source>
        <dbReference type="UniProtKB" id="Q9YHT1"/>
    </source>
</evidence>
<evidence type="ECO:0000269" key="5">
    <source>
    </source>
</evidence>
<evidence type="ECO:0000269" key="6">
    <source>
    </source>
</evidence>
<evidence type="ECO:0000269" key="7">
    <source>
    </source>
</evidence>
<evidence type="ECO:0000269" key="8">
    <source>
    </source>
</evidence>
<evidence type="ECO:0000269" key="9">
    <source>
    </source>
</evidence>
<evidence type="ECO:0000269" key="10">
    <source>
    </source>
</evidence>
<evidence type="ECO:0000269" key="11">
    <source>
    </source>
</evidence>
<evidence type="ECO:0000269" key="12">
    <source>
    </source>
</evidence>
<evidence type="ECO:0000269" key="13">
    <source>
    </source>
</evidence>
<evidence type="ECO:0000269" key="14">
    <source>
    </source>
</evidence>
<evidence type="ECO:0000269" key="15">
    <source>
    </source>
</evidence>
<evidence type="ECO:0000269" key="16">
    <source>
    </source>
</evidence>
<evidence type="ECO:0000269" key="17">
    <source>
    </source>
</evidence>
<evidence type="ECO:0000269" key="18">
    <source>
    </source>
</evidence>
<evidence type="ECO:0000269" key="19">
    <source>
    </source>
</evidence>
<evidence type="ECO:0000269" key="20">
    <source>
    </source>
</evidence>
<evidence type="ECO:0000269" key="21">
    <source>
    </source>
</evidence>
<evidence type="ECO:0000269" key="22">
    <source>
    </source>
</evidence>
<evidence type="ECO:0000269" key="23">
    <source>
    </source>
</evidence>
<evidence type="ECO:0000269" key="24">
    <source ref="5"/>
</evidence>
<evidence type="ECO:0000303" key="25">
    <source>
    </source>
</evidence>
<evidence type="ECO:0000303" key="26">
    <source>
    </source>
</evidence>
<evidence type="ECO:0000305" key="27"/>
<evidence type="ECO:0000305" key="28">
    <source>
    </source>
</evidence>
<evidence type="ECO:0007744" key="29">
    <source>
        <dbReference type="PDB" id="6VAX"/>
    </source>
</evidence>
<evidence type="ECO:0007744" key="30">
    <source>
        <dbReference type="PDB" id="8DYD"/>
    </source>
</evidence>
<evidence type="ECO:0007744" key="31">
    <source>
        <dbReference type="PDB" id="8DYE"/>
    </source>
</evidence>
<evidence type="ECO:0007744" key="32">
    <source>
        <dbReference type="PDB" id="8GS8"/>
    </source>
</evidence>
<evidence type="ECO:0007744" key="33">
    <source>
    </source>
</evidence>
<evidence type="ECO:0007829" key="34">
    <source>
        <dbReference type="PDB" id="8DYD"/>
    </source>
</evidence>
<evidence type="ECO:0007829" key="35">
    <source>
        <dbReference type="PDB" id="8DYE"/>
    </source>
</evidence>
<evidence type="ECO:0007829" key="36">
    <source>
        <dbReference type="PDB" id="8GS8"/>
    </source>
</evidence>